<keyword id="KW-0274">FAD</keyword>
<keyword id="KW-0285">Flavoprotein</keyword>
<keyword id="KW-0496">Mitochondrion</keyword>
<keyword id="KW-0560">Oxidoreductase</keyword>
<keyword id="KW-1185">Reference proteome</keyword>
<keyword id="KW-0809">Transit peptide</keyword>
<organism evidence="12">
    <name type="scientific">Drosophila melanogaster</name>
    <name type="common">Fruit fly</name>
    <dbReference type="NCBI Taxonomy" id="7227"/>
    <lineage>
        <taxon>Eukaryota</taxon>
        <taxon>Metazoa</taxon>
        <taxon>Ecdysozoa</taxon>
        <taxon>Arthropoda</taxon>
        <taxon>Hexapoda</taxon>
        <taxon>Insecta</taxon>
        <taxon>Pterygota</taxon>
        <taxon>Neoptera</taxon>
        <taxon>Endopterygota</taxon>
        <taxon>Diptera</taxon>
        <taxon>Brachycera</taxon>
        <taxon>Muscomorpha</taxon>
        <taxon>Ephydroidea</taxon>
        <taxon>Drosophilidae</taxon>
        <taxon>Drosophila</taxon>
        <taxon>Sophophora</taxon>
    </lineage>
</organism>
<name>ACAD9_DROME</name>
<protein>
    <recommendedName>
        <fullName evidence="1">Complex I assembly factor Egm, mitochondrial</fullName>
    </recommendedName>
    <alternativeName>
        <fullName evidence="8">Acyl-CoA dehydrogenase family member 9 homolog</fullName>
        <shortName evidence="8">dACAD9</shortName>
        <ecNumber evidence="1">1.3.8.-</ecNumber>
    </alternativeName>
    <alternativeName>
        <fullName evidence="7 11">Protein Enigma</fullName>
    </alternativeName>
</protein>
<accession>Q5U117</accession>
<evidence type="ECO:0000250" key="1">
    <source>
        <dbReference type="UniProtKB" id="Q9H845"/>
    </source>
</evidence>
<evidence type="ECO:0000255" key="2"/>
<evidence type="ECO:0000255" key="3">
    <source>
        <dbReference type="RuleBase" id="RU362125"/>
    </source>
</evidence>
<evidence type="ECO:0000256" key="4">
    <source>
        <dbReference type="SAM" id="MobiDB-lite"/>
    </source>
</evidence>
<evidence type="ECO:0000269" key="5">
    <source>
    </source>
</evidence>
<evidence type="ECO:0000269" key="6">
    <source>
    </source>
</evidence>
<evidence type="ECO:0000303" key="7">
    <source>
    </source>
</evidence>
<evidence type="ECO:0000303" key="8">
    <source>
    </source>
</evidence>
<evidence type="ECO:0000305" key="9"/>
<evidence type="ECO:0000312" key="10">
    <source>
        <dbReference type="EMBL" id="AAV36960.1"/>
    </source>
</evidence>
<evidence type="ECO:0000312" key="11">
    <source>
        <dbReference type="FlyBase" id="FBgn0086712"/>
    </source>
</evidence>
<evidence type="ECO:0000312" key="12">
    <source>
        <dbReference type="Proteomes" id="UP000000803"/>
    </source>
</evidence>
<sequence length="639" mass="70808">MRPNLFSGASRLLTYSRNGKLLTRGRSTKATSSSLDSQHQDAATTEGGRAESVEESPEQQRKLPTREPLAKNFFIGVVDKELLAYPEVIPRDEMAQLENSLLPLKNYFVEPRETEETSPETLRQLGLYGLNVSTDYEGKGYGWSASLMASEPDSTDINVTLGLQTHRVVVDLLKEVGTPLQQQRYLQDLATGKLIGTEAIYEISPPEEDYFNTTAELFPEYGKWQLNGEKSFVICTPGERQLFLVLAQTQQPNVPGVLGRGTTIFLVDSQQEGVRLGEKHATFGCRKAEIRRVHFEGVKLGEDQVVGLPHDGNRYSEQLVRSSRLRGSLVGLSLAKKLLNELAQYTVNTTQCGVQLQDLELTRIHMSRAMCSVYAMESMLYLTAGLLDEFRAQDVTLESAITKYFTLRQVYAIASQNLGVVGPKSLLSGETTELGLRDAAQLCTQGESLDTLGMFIALTGLQHAGQAMNTGVRKSRNPLFNPGHIFGKFLDNNSIDNPKTKMQLSEHVHPSLEAAAQCIELSVARLQMAVELMFTKHGNAVVERQSEMQRLAEVGTLIYAMWASVARASRSYCIGLPLADHELLTATAICSEGRDRVRTLCTEIYGGHFVNNDNNLVRLSKQVAKSKGYFAVHPLTFNF</sequence>
<reference evidence="12" key="1">
    <citation type="journal article" date="2000" name="Science">
        <title>The genome sequence of Drosophila melanogaster.</title>
        <authorList>
            <person name="Adams M.D."/>
            <person name="Celniker S.E."/>
            <person name="Holt R.A."/>
            <person name="Evans C.A."/>
            <person name="Gocayne J.D."/>
            <person name="Amanatides P.G."/>
            <person name="Scherer S.E."/>
            <person name="Li P.W."/>
            <person name="Hoskins R.A."/>
            <person name="Galle R.F."/>
            <person name="George R.A."/>
            <person name="Lewis S.E."/>
            <person name="Richards S."/>
            <person name="Ashburner M."/>
            <person name="Henderson S.N."/>
            <person name="Sutton G.G."/>
            <person name="Wortman J.R."/>
            <person name="Yandell M.D."/>
            <person name="Zhang Q."/>
            <person name="Chen L.X."/>
            <person name="Brandon R.C."/>
            <person name="Rogers Y.-H.C."/>
            <person name="Blazej R.G."/>
            <person name="Champe M."/>
            <person name="Pfeiffer B.D."/>
            <person name="Wan K.H."/>
            <person name="Doyle C."/>
            <person name="Baxter E.G."/>
            <person name="Helt G."/>
            <person name="Nelson C.R."/>
            <person name="Miklos G.L.G."/>
            <person name="Abril J.F."/>
            <person name="Agbayani A."/>
            <person name="An H.-J."/>
            <person name="Andrews-Pfannkoch C."/>
            <person name="Baldwin D."/>
            <person name="Ballew R.M."/>
            <person name="Basu A."/>
            <person name="Baxendale J."/>
            <person name="Bayraktaroglu L."/>
            <person name="Beasley E.M."/>
            <person name="Beeson K.Y."/>
            <person name="Benos P.V."/>
            <person name="Berman B.P."/>
            <person name="Bhandari D."/>
            <person name="Bolshakov S."/>
            <person name="Borkova D."/>
            <person name="Botchan M.R."/>
            <person name="Bouck J."/>
            <person name="Brokstein P."/>
            <person name="Brottier P."/>
            <person name="Burtis K.C."/>
            <person name="Busam D.A."/>
            <person name="Butler H."/>
            <person name="Cadieu E."/>
            <person name="Center A."/>
            <person name="Chandra I."/>
            <person name="Cherry J.M."/>
            <person name="Cawley S."/>
            <person name="Dahlke C."/>
            <person name="Davenport L.B."/>
            <person name="Davies P."/>
            <person name="de Pablos B."/>
            <person name="Delcher A."/>
            <person name="Deng Z."/>
            <person name="Mays A.D."/>
            <person name="Dew I."/>
            <person name="Dietz S.M."/>
            <person name="Dodson K."/>
            <person name="Doup L.E."/>
            <person name="Downes M."/>
            <person name="Dugan-Rocha S."/>
            <person name="Dunkov B.C."/>
            <person name="Dunn P."/>
            <person name="Durbin K.J."/>
            <person name="Evangelista C.C."/>
            <person name="Ferraz C."/>
            <person name="Ferriera S."/>
            <person name="Fleischmann W."/>
            <person name="Fosler C."/>
            <person name="Gabrielian A.E."/>
            <person name="Garg N.S."/>
            <person name="Gelbart W.M."/>
            <person name="Glasser K."/>
            <person name="Glodek A."/>
            <person name="Gong F."/>
            <person name="Gorrell J.H."/>
            <person name="Gu Z."/>
            <person name="Guan P."/>
            <person name="Harris M."/>
            <person name="Harris N.L."/>
            <person name="Harvey D.A."/>
            <person name="Heiman T.J."/>
            <person name="Hernandez J.R."/>
            <person name="Houck J."/>
            <person name="Hostin D."/>
            <person name="Houston K.A."/>
            <person name="Howland T.J."/>
            <person name="Wei M.-H."/>
            <person name="Ibegwam C."/>
            <person name="Jalali M."/>
            <person name="Kalush F."/>
            <person name="Karpen G.H."/>
            <person name="Ke Z."/>
            <person name="Kennison J.A."/>
            <person name="Ketchum K.A."/>
            <person name="Kimmel B.E."/>
            <person name="Kodira C.D."/>
            <person name="Kraft C.L."/>
            <person name="Kravitz S."/>
            <person name="Kulp D."/>
            <person name="Lai Z."/>
            <person name="Lasko P."/>
            <person name="Lei Y."/>
            <person name="Levitsky A.A."/>
            <person name="Li J.H."/>
            <person name="Li Z."/>
            <person name="Liang Y."/>
            <person name="Lin X."/>
            <person name="Liu X."/>
            <person name="Mattei B."/>
            <person name="McIntosh T.C."/>
            <person name="McLeod M.P."/>
            <person name="McPherson D."/>
            <person name="Merkulov G."/>
            <person name="Milshina N.V."/>
            <person name="Mobarry C."/>
            <person name="Morris J."/>
            <person name="Moshrefi A."/>
            <person name="Mount S.M."/>
            <person name="Moy M."/>
            <person name="Murphy B."/>
            <person name="Murphy L."/>
            <person name="Muzny D.M."/>
            <person name="Nelson D.L."/>
            <person name="Nelson D.R."/>
            <person name="Nelson K.A."/>
            <person name="Nixon K."/>
            <person name="Nusskern D.R."/>
            <person name="Pacleb J.M."/>
            <person name="Palazzolo M."/>
            <person name="Pittman G.S."/>
            <person name="Pan S."/>
            <person name="Pollard J."/>
            <person name="Puri V."/>
            <person name="Reese M.G."/>
            <person name="Reinert K."/>
            <person name="Remington K."/>
            <person name="Saunders R.D.C."/>
            <person name="Scheeler F."/>
            <person name="Shen H."/>
            <person name="Shue B.C."/>
            <person name="Siden-Kiamos I."/>
            <person name="Simpson M."/>
            <person name="Skupski M.P."/>
            <person name="Smith T.J."/>
            <person name="Spier E."/>
            <person name="Spradling A.C."/>
            <person name="Stapleton M."/>
            <person name="Strong R."/>
            <person name="Sun E."/>
            <person name="Svirskas R."/>
            <person name="Tector C."/>
            <person name="Turner R."/>
            <person name="Venter E."/>
            <person name="Wang A.H."/>
            <person name="Wang X."/>
            <person name="Wang Z.-Y."/>
            <person name="Wassarman D.A."/>
            <person name="Weinstock G.M."/>
            <person name="Weissenbach J."/>
            <person name="Williams S.M."/>
            <person name="Woodage T."/>
            <person name="Worley K.C."/>
            <person name="Wu D."/>
            <person name="Yang S."/>
            <person name="Yao Q.A."/>
            <person name="Ye J."/>
            <person name="Yeh R.-F."/>
            <person name="Zaveri J.S."/>
            <person name="Zhan M."/>
            <person name="Zhang G."/>
            <person name="Zhao Q."/>
            <person name="Zheng L."/>
            <person name="Zheng X.H."/>
            <person name="Zhong F.N."/>
            <person name="Zhong W."/>
            <person name="Zhou X."/>
            <person name="Zhu S.C."/>
            <person name="Zhu X."/>
            <person name="Smith H.O."/>
            <person name="Gibbs R.A."/>
            <person name="Myers E.W."/>
            <person name="Rubin G.M."/>
            <person name="Venter J.C."/>
        </authorList>
    </citation>
    <scope>NUCLEOTIDE SEQUENCE [LARGE SCALE GENOMIC DNA]</scope>
    <source>
        <strain evidence="12">Berkeley</strain>
    </source>
</reference>
<reference evidence="12" key="2">
    <citation type="journal article" date="2002" name="Genome Biol.">
        <title>Annotation of the Drosophila melanogaster euchromatic genome: a systematic review.</title>
        <authorList>
            <person name="Misra S."/>
            <person name="Crosby M.A."/>
            <person name="Mungall C.J."/>
            <person name="Matthews B.B."/>
            <person name="Campbell K.S."/>
            <person name="Hradecky P."/>
            <person name="Huang Y."/>
            <person name="Kaminker J.S."/>
            <person name="Millburn G.H."/>
            <person name="Prochnik S.E."/>
            <person name="Smith C.D."/>
            <person name="Tupy J.L."/>
            <person name="Whitfield E.J."/>
            <person name="Bayraktaroglu L."/>
            <person name="Berman B.P."/>
            <person name="Bettencourt B.R."/>
            <person name="Celniker S.E."/>
            <person name="de Grey A.D.N.J."/>
            <person name="Drysdale R.A."/>
            <person name="Harris N.L."/>
            <person name="Richter J."/>
            <person name="Russo S."/>
            <person name="Schroeder A.J."/>
            <person name="Shu S.Q."/>
            <person name="Stapleton M."/>
            <person name="Yamada C."/>
            <person name="Ashburner M."/>
            <person name="Gelbart W.M."/>
            <person name="Rubin G.M."/>
            <person name="Lewis S.E."/>
        </authorList>
    </citation>
    <scope>GENOME REANNOTATION</scope>
    <source>
        <strain evidence="12">Berkeley</strain>
    </source>
</reference>
<reference evidence="10" key="3">
    <citation type="submission" date="2004-10" db="EMBL/GenBank/DDBJ databases">
        <authorList>
            <person name="Stapleton M."/>
            <person name="Carlson J."/>
            <person name="Chavez C."/>
            <person name="Frise E."/>
            <person name="George R."/>
            <person name="Pacleb J."/>
            <person name="Park S."/>
            <person name="Wan K."/>
            <person name="Yu C."/>
            <person name="Rubin G.M."/>
            <person name="Celniker S."/>
        </authorList>
    </citation>
    <scope>NUCLEOTIDE SEQUENCE [LARGE SCALE MRNA]</scope>
    <source>
        <strain evidence="10">Berkeley</strain>
    </source>
</reference>
<reference evidence="9" key="4">
    <citation type="journal article" date="2006" name="Proc. Natl. Acad. Sci. U.S.A.">
        <title>Enigma, a mitochondrial protein affecting lifespan and oxidative stress response in Drosophila.</title>
        <authorList>
            <person name="Mourikis P."/>
            <person name="Hurlbut G.D."/>
            <person name="Artavanis-Tsakonas S."/>
        </authorList>
    </citation>
    <scope>SUBCELLULAR LOCATION</scope>
    <scope>DISRUPTION PHENOTYPE</scope>
</reference>
<reference evidence="9" key="5">
    <citation type="journal article" date="2021" name="IScience">
        <title>Dissecting the concordant and disparate roles of NDUFAF3 and NDUFAF4 in mitochondrial complex I biogenesis.</title>
        <authorList>
            <person name="Murari A."/>
            <person name="Rhooms S.K."/>
            <person name="Garcia C."/>
            <person name="Liu T."/>
            <person name="Li H."/>
            <person name="Mishra B."/>
            <person name="Deshong C."/>
            <person name="Owusu-Ansah E."/>
        </authorList>
    </citation>
    <scope>FUNCTION</scope>
    <scope>INTERACTION WITH COMPLEX 1</scope>
</reference>
<comment type="function">
    <text evidence="6">As part of the MCIA complex, primarily participates in the assembly of the mitochondrial complex I and therefore plays a role in oxidative phosphorylation.</text>
</comment>
<comment type="cofactor">
    <cofactor evidence="3">
        <name>FAD</name>
        <dbReference type="ChEBI" id="CHEBI:57692"/>
    </cofactor>
</comment>
<comment type="subunit">
    <text evidence="6">Associates with mitochondrial complex I assembly intermediates during its biogenesis.</text>
</comment>
<comment type="subcellular location">
    <subcellularLocation>
        <location evidence="5">Mitochondrion</location>
    </subcellularLocation>
</comment>
<comment type="disruption phenotype">
    <text evidence="5">Late larval lethal at third instar; larvae die before pupation (PubMed:16434470). Larvae have delayed development and an almost 4-fold prolonged lifespan, develop subcuticular melanotic masses, have small eye and wing imaginal discs, and have malformed fat bodies (PubMed:16434470).</text>
</comment>
<comment type="similarity">
    <text evidence="3">Belongs to the acyl-CoA dehydrogenase family.</text>
</comment>
<gene>
    <name evidence="7 11" type="primary">Egm</name>
    <name evidence="8" type="synonym">ACAD9</name>
    <name evidence="11" type="ORF">CG9006</name>
</gene>
<dbReference type="EC" id="1.3.8.-" evidence="1"/>
<dbReference type="EMBL" id="AE013599">
    <property type="protein sequence ID" value="AAF58637.1"/>
    <property type="molecule type" value="Genomic_DNA"/>
</dbReference>
<dbReference type="EMBL" id="BT016075">
    <property type="protein sequence ID" value="AAV36960.1"/>
    <property type="molecule type" value="mRNA"/>
</dbReference>
<dbReference type="RefSeq" id="NP_610687.1">
    <property type="nucleotide sequence ID" value="NM_136843.2"/>
</dbReference>
<dbReference type="SMR" id="Q5U117"/>
<dbReference type="FunCoup" id="Q5U117">
    <property type="interactions" value="144"/>
</dbReference>
<dbReference type="IntAct" id="Q5U117">
    <property type="interactions" value="2"/>
</dbReference>
<dbReference type="STRING" id="7227.FBpp0087192"/>
<dbReference type="PaxDb" id="7227-FBpp0087192"/>
<dbReference type="DNASU" id="36242"/>
<dbReference type="EnsemblMetazoa" id="FBtr0088090">
    <property type="protein sequence ID" value="FBpp0087192"/>
    <property type="gene ID" value="FBgn0086712"/>
</dbReference>
<dbReference type="GeneID" id="36242"/>
<dbReference type="KEGG" id="dme:Dmel_CG9006"/>
<dbReference type="UCSC" id="CG9006-RA">
    <property type="organism name" value="d. melanogaster"/>
</dbReference>
<dbReference type="AGR" id="FB:FBgn0086712"/>
<dbReference type="CTD" id="36242"/>
<dbReference type="FlyBase" id="FBgn0086712">
    <property type="gene designation" value="Egm"/>
</dbReference>
<dbReference type="VEuPathDB" id="VectorBase:FBgn0086712"/>
<dbReference type="eggNOG" id="KOG0137">
    <property type="taxonomic scope" value="Eukaryota"/>
</dbReference>
<dbReference type="HOGENOM" id="CLU_018204_11_3_1"/>
<dbReference type="OMA" id="IYAMWAS"/>
<dbReference type="OrthoDB" id="354at2759"/>
<dbReference type="BioGRID-ORCS" id="36242">
    <property type="hits" value="0 hits in 1 CRISPR screen"/>
</dbReference>
<dbReference type="Proteomes" id="UP000000803">
    <property type="component" value="Chromosome 2R"/>
</dbReference>
<dbReference type="Bgee" id="FBgn0086712">
    <property type="expression patterns" value="Expressed in capitellum (Drosophila) and 67 other cell types or tissues"/>
</dbReference>
<dbReference type="GO" id="GO:0005737">
    <property type="term" value="C:cytoplasm"/>
    <property type="evidence" value="ECO:0000318"/>
    <property type="project" value="GO_Central"/>
</dbReference>
<dbReference type="GO" id="GO:0005759">
    <property type="term" value="C:mitochondrial matrix"/>
    <property type="evidence" value="ECO:0000314"/>
    <property type="project" value="FlyBase"/>
</dbReference>
<dbReference type="GO" id="GO:0005739">
    <property type="term" value="C:mitochondrion"/>
    <property type="evidence" value="ECO:0000314"/>
    <property type="project" value="FlyBase"/>
</dbReference>
<dbReference type="GO" id="GO:0050660">
    <property type="term" value="F:flavin adenine dinucleotide binding"/>
    <property type="evidence" value="ECO:0007669"/>
    <property type="project" value="InterPro"/>
</dbReference>
<dbReference type="GO" id="GO:0070991">
    <property type="term" value="F:medium-chain fatty acyl-CoA dehydrogenase activity"/>
    <property type="evidence" value="ECO:0000318"/>
    <property type="project" value="GO_Central"/>
</dbReference>
<dbReference type="GO" id="GO:0001745">
    <property type="term" value="P:compound eye morphogenesis"/>
    <property type="evidence" value="ECO:0000316"/>
    <property type="project" value="FlyBase"/>
</dbReference>
<dbReference type="GO" id="GO:0006635">
    <property type="term" value="P:fatty acid beta-oxidation"/>
    <property type="evidence" value="ECO:0000315"/>
    <property type="project" value="FlyBase"/>
</dbReference>
<dbReference type="GO" id="GO:0055088">
    <property type="term" value="P:lipid homeostasis"/>
    <property type="evidence" value="ECO:0000315"/>
    <property type="project" value="FlyBase"/>
</dbReference>
<dbReference type="GO" id="GO:0051793">
    <property type="term" value="P:medium-chain fatty acid catabolic process"/>
    <property type="evidence" value="ECO:0000318"/>
    <property type="project" value="GO_Central"/>
</dbReference>
<dbReference type="GO" id="GO:0032981">
    <property type="term" value="P:mitochondrial respiratory chain complex I assembly"/>
    <property type="evidence" value="ECO:0000304"/>
    <property type="project" value="FlyBase"/>
</dbReference>
<dbReference type="GO" id="GO:1900408">
    <property type="term" value="P:negative regulation of cellular response to oxidative stress"/>
    <property type="evidence" value="ECO:0000315"/>
    <property type="project" value="FlyBase"/>
</dbReference>
<dbReference type="GO" id="GO:0034976">
    <property type="term" value="P:response to endoplasmic reticulum stress"/>
    <property type="evidence" value="ECO:0007001"/>
    <property type="project" value="FlyBase"/>
</dbReference>
<dbReference type="GO" id="GO:0019953">
    <property type="term" value="P:sexual reproduction"/>
    <property type="evidence" value="ECO:0007007"/>
    <property type="project" value="FlyBase"/>
</dbReference>
<dbReference type="CDD" id="cd00567">
    <property type="entry name" value="ACAD"/>
    <property type="match status" value="1"/>
</dbReference>
<dbReference type="FunFam" id="1.20.140.10:FF:000081">
    <property type="entry name" value="GD25894"/>
    <property type="match status" value="1"/>
</dbReference>
<dbReference type="FunFam" id="1.10.540.10:FF:000090">
    <property type="entry name" value="GM20419"/>
    <property type="match status" value="1"/>
</dbReference>
<dbReference type="FunFam" id="1.20.140.10:FF:000066">
    <property type="entry name" value="GM20419"/>
    <property type="match status" value="1"/>
</dbReference>
<dbReference type="Gene3D" id="1.10.540.10">
    <property type="entry name" value="Acyl-CoA dehydrogenase/oxidase, N-terminal domain"/>
    <property type="match status" value="1"/>
</dbReference>
<dbReference type="Gene3D" id="2.40.110.10">
    <property type="entry name" value="Butyryl-CoA Dehydrogenase, subunit A, domain 2"/>
    <property type="match status" value="1"/>
</dbReference>
<dbReference type="Gene3D" id="1.20.140.10">
    <property type="entry name" value="Butyryl-CoA Dehydrogenase, subunit A, domain 3"/>
    <property type="match status" value="2"/>
</dbReference>
<dbReference type="InterPro" id="IPR049448">
    <property type="entry name" value="ACAD9/ACADV-like_C"/>
</dbReference>
<dbReference type="InterPro" id="IPR006091">
    <property type="entry name" value="Acyl-CoA_Oxase/DH_mid-dom"/>
</dbReference>
<dbReference type="InterPro" id="IPR046373">
    <property type="entry name" value="Acyl-CoA_Oxase/DH_mid-dom_sf"/>
</dbReference>
<dbReference type="InterPro" id="IPR036250">
    <property type="entry name" value="AcylCo_DH-like_C"/>
</dbReference>
<dbReference type="InterPro" id="IPR009075">
    <property type="entry name" value="AcylCo_DH/oxidase_C"/>
</dbReference>
<dbReference type="InterPro" id="IPR013786">
    <property type="entry name" value="AcylCoA_DH/ox_N"/>
</dbReference>
<dbReference type="InterPro" id="IPR037069">
    <property type="entry name" value="AcylCoA_DH/ox_N_sf"/>
</dbReference>
<dbReference type="InterPro" id="IPR009100">
    <property type="entry name" value="AcylCoA_DH/oxidase_NM_dom_sf"/>
</dbReference>
<dbReference type="PANTHER" id="PTHR43884">
    <property type="entry name" value="ACYL-COA DEHYDROGENASE"/>
    <property type="match status" value="1"/>
</dbReference>
<dbReference type="PANTHER" id="PTHR43884:SF9">
    <property type="entry name" value="COMPLEX I ASSEMBLY FACTOR ACAD9, MITOCHONDRIAL"/>
    <property type="match status" value="1"/>
</dbReference>
<dbReference type="Pfam" id="PF21343">
    <property type="entry name" value="ACAD9-ACADV_C"/>
    <property type="match status" value="1"/>
</dbReference>
<dbReference type="Pfam" id="PF00441">
    <property type="entry name" value="Acyl-CoA_dh_1"/>
    <property type="match status" value="1"/>
</dbReference>
<dbReference type="Pfam" id="PF02770">
    <property type="entry name" value="Acyl-CoA_dh_M"/>
    <property type="match status" value="1"/>
</dbReference>
<dbReference type="Pfam" id="PF02771">
    <property type="entry name" value="Acyl-CoA_dh_N"/>
    <property type="match status" value="1"/>
</dbReference>
<dbReference type="SUPFAM" id="SSF47203">
    <property type="entry name" value="Acyl-CoA dehydrogenase C-terminal domain-like"/>
    <property type="match status" value="2"/>
</dbReference>
<dbReference type="SUPFAM" id="SSF56645">
    <property type="entry name" value="Acyl-CoA dehydrogenase NM domain-like"/>
    <property type="match status" value="1"/>
</dbReference>
<feature type="transit peptide" description="Mitochondrion" evidence="2">
    <location>
        <begin position="1"/>
        <end position="26"/>
    </location>
</feature>
<feature type="chain" id="PRO_0000461812" description="Complex I assembly factor Egm, mitochondrial" evidence="2">
    <location>
        <begin position="27"/>
        <end position="639"/>
    </location>
</feature>
<feature type="region of interest" description="Disordered" evidence="4">
    <location>
        <begin position="23"/>
        <end position="65"/>
    </location>
</feature>
<feature type="compositionally biased region" description="Polar residues" evidence="4">
    <location>
        <begin position="28"/>
        <end position="43"/>
    </location>
</feature>
<feature type="compositionally biased region" description="Basic and acidic residues" evidence="4">
    <location>
        <begin position="48"/>
        <end position="65"/>
    </location>
</feature>
<proteinExistence type="evidence at protein level"/>